<accession>A1DA63</accession>
<proteinExistence type="inferred from homology"/>
<comment type="function">
    <text evidence="2 4">Cytochrome P450 monooxygenase; part of the gene cluster that mediates the biosynthesis of fumitremorgins, indole alkaloids that carry not only intriguing chemical structures, but also interesting biological and pharmacological activities (PubMed:23109474). The biosynthesis of fumitremorgin-type alkaloids begins by condensation of the two amino acids L-tryptophan and L-proline to brevianamide F, catalyzed by the non-ribosomal peptide synthetase ftmPS/ftmA (By similarity). Brevianamide F is then prenylated by the prenyltransferase ftmPT1/ftmB in the presence of dimethylallyl diphosphate, resulting in the formation of tryprostatin B (By similarity). The three cytochrome P450 monooxygenases, ftmP450-1/ftmC, ftmP450-2/ftmE and ftmP450-3/FtmG, are responsible for the conversion of tryprostatin B to 6-hydroxytryprostatin B, tryprostatin A to fumitremorgin C and fumitremorgin C to 12,13-dihydroxyfumitremorgin C, respectively (By similarity). The putative methyltransferase ftmMT/ftmD is expected for the conversion of 6-hydroxytryprostatin B to tryprostatin A (By similarity). FtmPT2/FtmH catalyzes the prenylation of 12,13-dihydroxyfumitre-morgin C in the presence of dimethylallyl diphosphate, resulting in the formation of fumitremorgin B (By similarity). Fumitremorgin B is further converted to verruculogen by ftmOx1/ftmF via the insertion of an endoperoxide bond between the two prenyl moieties (By similarity). Finally, verruculogen is further converted to fumitremorgin A by the verruculogen prenyltransferase ftmPT3 (PubMed:23109474).</text>
</comment>
<comment type="catalytic activity">
    <reaction evidence="2">
        <text>tryprostatin A + reduced [NADPH--hemoprotein reductase] + O2 = fumitremorgin C + oxidized [NADPH--hemoprotein reductase] + 2 H2O + H(+)</text>
        <dbReference type="Rhea" id="RHEA:35963"/>
        <dbReference type="Rhea" id="RHEA-COMP:11964"/>
        <dbReference type="Rhea" id="RHEA-COMP:11965"/>
        <dbReference type="ChEBI" id="CHEBI:15377"/>
        <dbReference type="ChEBI" id="CHEBI:15378"/>
        <dbReference type="ChEBI" id="CHEBI:15379"/>
        <dbReference type="ChEBI" id="CHEBI:57618"/>
        <dbReference type="ChEBI" id="CHEBI:58210"/>
        <dbReference type="ChEBI" id="CHEBI:72761"/>
        <dbReference type="ChEBI" id="CHEBI:72763"/>
        <dbReference type="EC" id="1.14.19.71"/>
    </reaction>
</comment>
<comment type="cofactor">
    <cofactor evidence="1">
        <name>heme</name>
        <dbReference type="ChEBI" id="CHEBI:30413"/>
    </cofactor>
</comment>
<comment type="pathway">
    <text evidence="2">Mycotoxin biosynthesis.</text>
</comment>
<comment type="subcellular location">
    <subcellularLocation>
        <location evidence="3">Membrane</location>
        <topology evidence="3">Single-pass membrane protein</topology>
    </subcellularLocation>
</comment>
<comment type="similarity">
    <text evidence="6">Belongs to the cytochrome P450 family.</text>
</comment>
<feature type="chain" id="PRO_0000424123" description="Fumitremorgin C synthase">
    <location>
        <begin position="1"/>
        <end position="526"/>
    </location>
</feature>
<feature type="transmembrane region" description="Helical" evidence="3">
    <location>
        <begin position="4"/>
        <end position="24"/>
    </location>
</feature>
<feature type="binding site" description="axial binding residue" evidence="1">
    <location>
        <position position="443"/>
    </location>
    <ligand>
        <name>heme</name>
        <dbReference type="ChEBI" id="CHEBI:30413"/>
    </ligand>
    <ligandPart>
        <name>Fe</name>
        <dbReference type="ChEBI" id="CHEBI:18248"/>
    </ligandPart>
</feature>
<sequence>MERLPLSPAVLFLTITLPILYFWILHTSPARHHGKQLPLPPGPPRLPKIGNLHQVPRQIPWKKYKEWSDTYGPIMSVQLANTIAVVFSSWDLIKTHVERRNTIYSSRPSVPFFLHATGGLNASILPYGPEWKLQRAIRSSVLKPSMTIKYRDVQSMETTQLLHELLSTNDFSVCLRRCIASVFLTVAYGERCADHAGLEAIDRLEELNRAIALHAEALFSGAAGILAQLVLPQALVDRLPVRWKKDADILHNRLTADLVARTRAALARPGWNWVKAFAIKEGTGSGEGDGEQGREVGLKRLAYMVGSLYEASMAASQALRVIILAGILYPDATRRMHDELDAVVGKDRLPDFNDAAQLPYTQAFIKEAMRWRSLTPMGSPRATSDEDECRGYHIPRGATVLVNVWAINHDEGVFLDPFTFKPERWIENPDLPQLLYGMGQRACPGRHMGQDSLFLGTARLFWAFDMALPDGAEAIDQERFLDSGTTLAAFLPDFEVRFTPRSEKHREVIENSVVVSSDVSSVTVAT</sequence>
<gene>
    <name evidence="5" type="primary">ftmP450-2</name>
    <name evidence="2" type="synonym">ftmE</name>
    <name type="ORF">NFIA_093730</name>
</gene>
<name>FTME_NEOFI</name>
<keyword id="KW-0017">Alkaloid metabolism</keyword>
<keyword id="KW-0349">Heme</keyword>
<keyword id="KW-0408">Iron</keyword>
<keyword id="KW-0472">Membrane</keyword>
<keyword id="KW-0479">Metal-binding</keyword>
<keyword id="KW-0503">Monooxygenase</keyword>
<keyword id="KW-0560">Oxidoreductase</keyword>
<keyword id="KW-1185">Reference proteome</keyword>
<keyword id="KW-0812">Transmembrane</keyword>
<keyword id="KW-1133">Transmembrane helix</keyword>
<keyword id="KW-0843">Virulence</keyword>
<protein>
    <recommendedName>
        <fullName evidence="5">Fumitremorgin C synthase</fullName>
        <ecNumber evidence="2">1.14.19.71</ecNumber>
    </recommendedName>
    <alternativeName>
        <fullName evidence="2">Fumitremorgin biosynthesis protein E</fullName>
    </alternativeName>
</protein>
<dbReference type="EC" id="1.14.19.71" evidence="2"/>
<dbReference type="EMBL" id="DS027694">
    <property type="protein sequence ID" value="EAW19753.1"/>
    <property type="molecule type" value="Genomic_DNA"/>
</dbReference>
<dbReference type="RefSeq" id="XP_001261650.1">
    <property type="nucleotide sequence ID" value="XM_001261649.1"/>
</dbReference>
<dbReference type="SMR" id="A1DA63"/>
<dbReference type="STRING" id="331117.A1DA63"/>
<dbReference type="EnsemblFungi" id="EAW19753">
    <property type="protein sequence ID" value="EAW19753"/>
    <property type="gene ID" value="NFIA_093730"/>
</dbReference>
<dbReference type="GeneID" id="4588683"/>
<dbReference type="KEGG" id="nfi:NFIA_093730"/>
<dbReference type="VEuPathDB" id="FungiDB:NFIA_093730"/>
<dbReference type="eggNOG" id="KOG0156">
    <property type="taxonomic scope" value="Eukaryota"/>
</dbReference>
<dbReference type="HOGENOM" id="CLU_001570_2_1_1"/>
<dbReference type="OMA" id="HVWFGSN"/>
<dbReference type="OrthoDB" id="1470350at2759"/>
<dbReference type="Proteomes" id="UP000006702">
    <property type="component" value="Unassembled WGS sequence"/>
</dbReference>
<dbReference type="GO" id="GO:0016020">
    <property type="term" value="C:membrane"/>
    <property type="evidence" value="ECO:0007669"/>
    <property type="project" value="UniProtKB-SubCell"/>
</dbReference>
<dbReference type="GO" id="GO:0020037">
    <property type="term" value="F:heme binding"/>
    <property type="evidence" value="ECO:0007669"/>
    <property type="project" value="InterPro"/>
</dbReference>
<dbReference type="GO" id="GO:0005506">
    <property type="term" value="F:iron ion binding"/>
    <property type="evidence" value="ECO:0007669"/>
    <property type="project" value="InterPro"/>
</dbReference>
<dbReference type="GO" id="GO:0004497">
    <property type="term" value="F:monooxygenase activity"/>
    <property type="evidence" value="ECO:0007669"/>
    <property type="project" value="UniProtKB-KW"/>
</dbReference>
<dbReference type="GO" id="GO:0016705">
    <property type="term" value="F:oxidoreductase activity, acting on paired donors, with incorporation or reduction of molecular oxygen"/>
    <property type="evidence" value="ECO:0007669"/>
    <property type="project" value="InterPro"/>
</dbReference>
<dbReference type="GO" id="GO:0009820">
    <property type="term" value="P:alkaloid metabolic process"/>
    <property type="evidence" value="ECO:0007669"/>
    <property type="project" value="UniProtKB-KW"/>
</dbReference>
<dbReference type="GO" id="GO:0044283">
    <property type="term" value="P:small molecule biosynthetic process"/>
    <property type="evidence" value="ECO:0007669"/>
    <property type="project" value="UniProtKB-ARBA"/>
</dbReference>
<dbReference type="CDD" id="cd11065">
    <property type="entry name" value="CYP64-like"/>
    <property type="match status" value="1"/>
</dbReference>
<dbReference type="FunFam" id="1.10.630.10:FF:000160">
    <property type="entry name" value="Fumitremorgin C synthase"/>
    <property type="match status" value="1"/>
</dbReference>
<dbReference type="Gene3D" id="1.10.630.10">
    <property type="entry name" value="Cytochrome P450"/>
    <property type="match status" value="1"/>
</dbReference>
<dbReference type="InterPro" id="IPR001128">
    <property type="entry name" value="Cyt_P450"/>
</dbReference>
<dbReference type="InterPro" id="IPR002401">
    <property type="entry name" value="Cyt_P450_E_grp-I"/>
</dbReference>
<dbReference type="InterPro" id="IPR036396">
    <property type="entry name" value="Cyt_P450_sf"/>
</dbReference>
<dbReference type="InterPro" id="IPR050364">
    <property type="entry name" value="Cytochrome_P450_fung"/>
</dbReference>
<dbReference type="PANTHER" id="PTHR46300:SF1">
    <property type="entry name" value="P450, PUTATIVE (EUROFUNG)-RELATED"/>
    <property type="match status" value="1"/>
</dbReference>
<dbReference type="PANTHER" id="PTHR46300">
    <property type="entry name" value="P450, PUTATIVE (EUROFUNG)-RELATED-RELATED"/>
    <property type="match status" value="1"/>
</dbReference>
<dbReference type="Pfam" id="PF00067">
    <property type="entry name" value="p450"/>
    <property type="match status" value="1"/>
</dbReference>
<dbReference type="PRINTS" id="PR00463">
    <property type="entry name" value="EP450I"/>
</dbReference>
<dbReference type="SUPFAM" id="SSF48264">
    <property type="entry name" value="Cytochrome P450"/>
    <property type="match status" value="1"/>
</dbReference>
<organism>
    <name type="scientific">Neosartorya fischeri (strain ATCC 1020 / DSM 3700 / CBS 544.65 / FGSC A1164 / JCM 1740 / NRRL 181 / WB 181)</name>
    <name type="common">Aspergillus fischerianus</name>
    <dbReference type="NCBI Taxonomy" id="331117"/>
    <lineage>
        <taxon>Eukaryota</taxon>
        <taxon>Fungi</taxon>
        <taxon>Dikarya</taxon>
        <taxon>Ascomycota</taxon>
        <taxon>Pezizomycotina</taxon>
        <taxon>Eurotiomycetes</taxon>
        <taxon>Eurotiomycetidae</taxon>
        <taxon>Eurotiales</taxon>
        <taxon>Aspergillaceae</taxon>
        <taxon>Aspergillus</taxon>
        <taxon>Aspergillus subgen. Fumigati</taxon>
    </lineage>
</organism>
<reference key="1">
    <citation type="journal article" date="2008" name="PLoS Genet.">
        <title>Genomic islands in the pathogenic filamentous fungus Aspergillus fumigatus.</title>
        <authorList>
            <person name="Fedorova N.D."/>
            <person name="Khaldi N."/>
            <person name="Joardar V.S."/>
            <person name="Maiti R."/>
            <person name="Amedeo P."/>
            <person name="Anderson M.J."/>
            <person name="Crabtree J."/>
            <person name="Silva J.C."/>
            <person name="Badger J.H."/>
            <person name="Albarraq A."/>
            <person name="Angiuoli S."/>
            <person name="Bussey H."/>
            <person name="Bowyer P."/>
            <person name="Cotty P.J."/>
            <person name="Dyer P.S."/>
            <person name="Egan A."/>
            <person name="Galens K."/>
            <person name="Fraser-Liggett C.M."/>
            <person name="Haas B.J."/>
            <person name="Inman J.M."/>
            <person name="Kent R."/>
            <person name="Lemieux S."/>
            <person name="Malavazi I."/>
            <person name="Orvis J."/>
            <person name="Roemer T."/>
            <person name="Ronning C.M."/>
            <person name="Sundaram J.P."/>
            <person name="Sutton G."/>
            <person name="Turner G."/>
            <person name="Venter J.C."/>
            <person name="White O.R."/>
            <person name="Whitty B.R."/>
            <person name="Youngman P."/>
            <person name="Wolfe K.H."/>
            <person name="Goldman G.H."/>
            <person name="Wortman J.R."/>
            <person name="Jiang B."/>
            <person name="Denning D.W."/>
            <person name="Nierman W.C."/>
        </authorList>
    </citation>
    <scope>NUCLEOTIDE SEQUENCE [LARGE SCALE GENOMIC DNA]</scope>
    <source>
        <strain>ATCC 1020 / DSM 3700 / CBS 544.65 / FGSC A1164 / JCM 1740 / NRRL 181 / WB 181</strain>
    </source>
</reference>
<reference key="2">
    <citation type="journal article" date="2012" name="ChemBioChem">
        <title>Identification of the verruculogen prenyltransferase FtmPT3 by a combination of chemical, bioinformatic and biochemical approaches.</title>
        <authorList>
            <person name="Mundt K."/>
            <person name="Wollinsky B."/>
            <person name="Ruan H.L."/>
            <person name="Zhu T."/>
            <person name="Li S.M."/>
        </authorList>
    </citation>
    <scope>FUNCTION</scope>
</reference>
<evidence type="ECO:0000250" key="1">
    <source>
        <dbReference type="UniProtKB" id="P04798"/>
    </source>
</evidence>
<evidence type="ECO:0000250" key="2">
    <source>
        <dbReference type="UniProtKB" id="Q4WAW8"/>
    </source>
</evidence>
<evidence type="ECO:0000255" key="3"/>
<evidence type="ECO:0000269" key="4">
    <source>
    </source>
</evidence>
<evidence type="ECO:0000303" key="5">
    <source>
    </source>
</evidence>
<evidence type="ECO:0000305" key="6"/>